<comment type="function">
    <text evidence="1 3">Component of the ERMES/MDM complex, which serves as a molecular tether to connect the endoplasmic reticulum (ER) and mitochondria (By similarity). Components of this complex are involved in the control of mitochondrial shape and protein biogenesis, and function in nonvesicular lipid trafficking between the ER and mitochondria (PubMed:10982393). The mdm12-mmm-1 subcomplex functions in the major beta-barrel assembly pathway that is responsible for biogenesis of all outer membrane beta-barrel proteins, and acts in a late step after the SAM complex. The mdm10-mdm12-mmm-1 subcomplex further acts in the TOM40-specific pathway after the action of the mdm12-mmm-1 complex. Essential for establishing and maintaining the structure of mitochondria and maintenance of mtDNA nucleoids (By similarity).</text>
</comment>
<comment type="subunit">
    <text evidence="1">Homodimer. Component of the ER-mitochondria encounter structure (ERMES) or MDM complex, composed of mmm-1, mdm10, mdm12 and mdm34. A mmm-1 homodimer associates with one molecule of mdm12 on each side in a pairwise head-to-tail manner, and the SMP-LTD domains of mmm-1 and mdm12 generate a continuous hydrophobic tunnel for phospholipid trafficking.</text>
</comment>
<comment type="subcellular location">
    <subcellularLocation>
        <location evidence="1">Endoplasmic reticulum membrane</location>
        <topology evidence="1">Single-pass type I membrane protein</topology>
    </subcellularLocation>
    <text evidence="1">The ERMES/MDM complex localizes to a few discrete foci (around 10 per single cell), that represent mitochondria-endoplasmic reticulum junctions. These foci are often found next to mtDNA nucleoids.</text>
</comment>
<comment type="domain">
    <text evidence="1">The SMP-LTD domain is a barrel-like domain that can bind various types of glycerophospholipids in its interior and mediate their transfer between two adjacent bilayers.</text>
</comment>
<comment type="similarity">
    <text evidence="1">Belongs to the MMM1 family.</text>
</comment>
<name>MMM1_NEUCR</name>
<gene>
    <name type="primary">mmm-1</name>
    <name type="ORF">NCU06193</name>
</gene>
<feature type="chain" id="PRO_0000384239" description="Maintenance of mitochondrial morphology protein 1">
    <location>
        <begin position="1"/>
        <end position="415"/>
    </location>
</feature>
<feature type="topological domain" description="Lumenal" evidence="1">
    <location>
        <begin position="1"/>
        <end position="18"/>
    </location>
</feature>
<feature type="transmembrane region" description="Helical" evidence="1">
    <location>
        <begin position="19"/>
        <end position="39"/>
    </location>
</feature>
<feature type="topological domain" description="Cytoplasmic" evidence="1">
    <location>
        <begin position="40"/>
        <end position="415"/>
    </location>
</feature>
<feature type="domain" description="SMP-LTD" evidence="1">
    <location>
        <begin position="114"/>
        <end position="330"/>
    </location>
</feature>
<feature type="region of interest" description="Disordered" evidence="2">
    <location>
        <begin position="373"/>
        <end position="415"/>
    </location>
</feature>
<feature type="compositionally biased region" description="Basic and acidic residues" evidence="2">
    <location>
        <begin position="373"/>
        <end position="389"/>
    </location>
</feature>
<feature type="compositionally biased region" description="Low complexity" evidence="2">
    <location>
        <begin position="404"/>
        <end position="415"/>
    </location>
</feature>
<organism>
    <name type="scientific">Neurospora crassa (strain ATCC 24698 / 74-OR23-1A / CBS 708.71 / DSM 1257 / FGSC 987)</name>
    <dbReference type="NCBI Taxonomy" id="367110"/>
    <lineage>
        <taxon>Eukaryota</taxon>
        <taxon>Fungi</taxon>
        <taxon>Dikarya</taxon>
        <taxon>Ascomycota</taxon>
        <taxon>Pezizomycotina</taxon>
        <taxon>Sordariomycetes</taxon>
        <taxon>Sordariomycetidae</taxon>
        <taxon>Sordariales</taxon>
        <taxon>Sordariaceae</taxon>
        <taxon>Neurospora</taxon>
    </lineage>
</organism>
<proteinExistence type="evidence at transcript level"/>
<evidence type="ECO:0000255" key="1">
    <source>
        <dbReference type="HAMAP-Rule" id="MF_03103"/>
    </source>
</evidence>
<evidence type="ECO:0000256" key="2">
    <source>
        <dbReference type="SAM" id="MobiDB-lite"/>
    </source>
</evidence>
<evidence type="ECO:0000269" key="3">
    <source>
    </source>
</evidence>
<keyword id="KW-0256">Endoplasmic reticulum</keyword>
<keyword id="KW-0445">Lipid transport</keyword>
<keyword id="KW-0446">Lipid-binding</keyword>
<keyword id="KW-0472">Membrane</keyword>
<keyword id="KW-1185">Reference proteome</keyword>
<keyword id="KW-0812">Transmembrane</keyword>
<keyword id="KW-1133">Transmembrane helix</keyword>
<keyword id="KW-0813">Transport</keyword>
<dbReference type="EMBL" id="AF238480">
    <property type="protein sequence ID" value="AAF43713.1"/>
    <property type="molecule type" value="Genomic_DNA"/>
</dbReference>
<dbReference type="EMBL" id="AF239620">
    <property type="protein sequence ID" value="AAF43714.1"/>
    <property type="molecule type" value="mRNA"/>
</dbReference>
<dbReference type="EMBL" id="CM002238">
    <property type="protein sequence ID" value="EAA33769.1"/>
    <property type="molecule type" value="Genomic_DNA"/>
</dbReference>
<dbReference type="RefSeq" id="XP_963005.1">
    <property type="nucleotide sequence ID" value="XM_957912.2"/>
</dbReference>
<dbReference type="SMR" id="Q9P353"/>
<dbReference type="FunCoup" id="Q9P353">
    <property type="interactions" value="63"/>
</dbReference>
<dbReference type="STRING" id="367110.Q9P353"/>
<dbReference type="PaxDb" id="5141-EFNCRP00000006009"/>
<dbReference type="EnsemblFungi" id="EAA33769">
    <property type="protein sequence ID" value="EAA33769"/>
    <property type="gene ID" value="NCU06193"/>
</dbReference>
<dbReference type="GeneID" id="3879153"/>
<dbReference type="KEGG" id="ncr:NCU06193"/>
<dbReference type="VEuPathDB" id="FungiDB:NCU06193"/>
<dbReference type="HOGENOM" id="CLU_032730_1_0_1"/>
<dbReference type="InParanoid" id="Q9P353"/>
<dbReference type="OMA" id="WSFTQGL"/>
<dbReference type="OrthoDB" id="5599157at2759"/>
<dbReference type="Proteomes" id="UP000001805">
    <property type="component" value="Chromosome 3, Linkage Group III"/>
</dbReference>
<dbReference type="GO" id="GO:0005783">
    <property type="term" value="C:endoplasmic reticulum"/>
    <property type="evidence" value="ECO:0000318"/>
    <property type="project" value="GO_Central"/>
</dbReference>
<dbReference type="GO" id="GO:0005789">
    <property type="term" value="C:endoplasmic reticulum membrane"/>
    <property type="evidence" value="ECO:0007669"/>
    <property type="project" value="UniProtKB-SubCell"/>
</dbReference>
<dbReference type="GO" id="GO:0032865">
    <property type="term" value="C:ERMES complex"/>
    <property type="evidence" value="ECO:0000318"/>
    <property type="project" value="GO_Central"/>
</dbReference>
<dbReference type="GO" id="GO:0008289">
    <property type="term" value="F:lipid binding"/>
    <property type="evidence" value="ECO:0000318"/>
    <property type="project" value="GO_Central"/>
</dbReference>
<dbReference type="GO" id="GO:0120013">
    <property type="term" value="F:lipid transfer activity"/>
    <property type="evidence" value="ECO:0007669"/>
    <property type="project" value="EnsemblFungi"/>
</dbReference>
<dbReference type="GO" id="GO:0015917">
    <property type="term" value="P:aminophospholipid transport"/>
    <property type="evidence" value="ECO:0000318"/>
    <property type="project" value="GO_Central"/>
</dbReference>
<dbReference type="GO" id="GO:0000002">
    <property type="term" value="P:mitochondrial genome maintenance"/>
    <property type="evidence" value="ECO:0007669"/>
    <property type="project" value="UniProtKB-UniRule"/>
</dbReference>
<dbReference type="GO" id="GO:0070096">
    <property type="term" value="P:mitochondrial outer membrane translocase complex assembly"/>
    <property type="evidence" value="ECO:0007669"/>
    <property type="project" value="EnsemblFungi"/>
</dbReference>
<dbReference type="GO" id="GO:1990456">
    <property type="term" value="P:mitochondrion-endoplasmic reticulum membrane tethering"/>
    <property type="evidence" value="ECO:0000318"/>
    <property type="project" value="GO_Central"/>
</dbReference>
<dbReference type="GO" id="GO:0045040">
    <property type="term" value="P:protein insertion into mitochondrial outer membrane"/>
    <property type="evidence" value="ECO:0007669"/>
    <property type="project" value="UniProtKB-UniRule"/>
</dbReference>
<dbReference type="CDD" id="cd21671">
    <property type="entry name" value="SMP_Mmm1"/>
    <property type="match status" value="1"/>
</dbReference>
<dbReference type="HAMAP" id="MF_03103">
    <property type="entry name" value="Mmm1"/>
    <property type="match status" value="1"/>
</dbReference>
<dbReference type="InterPro" id="IPR027537">
    <property type="entry name" value="Mmm1"/>
</dbReference>
<dbReference type="InterPro" id="IPR019411">
    <property type="entry name" value="MMM1_dom"/>
</dbReference>
<dbReference type="InterPro" id="IPR031468">
    <property type="entry name" value="SMP_LBD"/>
</dbReference>
<dbReference type="PANTHER" id="PTHR13466:SF0">
    <property type="entry name" value="SMP-LTD DOMAIN-CONTAINING PROTEIN"/>
    <property type="match status" value="1"/>
</dbReference>
<dbReference type="PANTHER" id="PTHR13466">
    <property type="entry name" value="TEX2 PROTEIN-RELATED"/>
    <property type="match status" value="1"/>
</dbReference>
<dbReference type="Pfam" id="PF10296">
    <property type="entry name" value="MMM1"/>
    <property type="match status" value="1"/>
</dbReference>
<dbReference type="PROSITE" id="PS51847">
    <property type="entry name" value="SMP"/>
    <property type="match status" value="1"/>
</dbReference>
<accession>Q9P353</accession>
<reference key="1">
    <citation type="journal article" date="2000" name="Mol. Biol. Cell">
        <title>Role of MMM1 in maintaining mitochondrial morphology in Neurospora crassa.</title>
        <authorList>
            <person name="Prokisch H."/>
            <person name="Neupert W."/>
            <person name="Westermann B."/>
        </authorList>
    </citation>
    <scope>NUCLEOTIDE SEQUENCE [GENOMIC DNA / MRNA]</scope>
    <scope>FUNCTION</scope>
    <source>
        <strain>ATCC 14692 / FGSC 262 / 74A</strain>
    </source>
</reference>
<reference key="2">
    <citation type="journal article" date="2003" name="Nature">
        <title>The genome sequence of the filamentous fungus Neurospora crassa.</title>
        <authorList>
            <person name="Galagan J.E."/>
            <person name="Calvo S.E."/>
            <person name="Borkovich K.A."/>
            <person name="Selker E.U."/>
            <person name="Read N.D."/>
            <person name="Jaffe D.B."/>
            <person name="FitzHugh W."/>
            <person name="Ma L.-J."/>
            <person name="Smirnov S."/>
            <person name="Purcell S."/>
            <person name="Rehman B."/>
            <person name="Elkins T."/>
            <person name="Engels R."/>
            <person name="Wang S."/>
            <person name="Nielsen C.B."/>
            <person name="Butler J."/>
            <person name="Endrizzi M."/>
            <person name="Qui D."/>
            <person name="Ianakiev P."/>
            <person name="Bell-Pedersen D."/>
            <person name="Nelson M.A."/>
            <person name="Werner-Washburne M."/>
            <person name="Selitrennikoff C.P."/>
            <person name="Kinsey J.A."/>
            <person name="Braun E.L."/>
            <person name="Zelter A."/>
            <person name="Schulte U."/>
            <person name="Kothe G.O."/>
            <person name="Jedd G."/>
            <person name="Mewes H.-W."/>
            <person name="Staben C."/>
            <person name="Marcotte E."/>
            <person name="Greenberg D."/>
            <person name="Roy A."/>
            <person name="Foley K."/>
            <person name="Naylor J."/>
            <person name="Stange-Thomann N."/>
            <person name="Barrett R."/>
            <person name="Gnerre S."/>
            <person name="Kamal M."/>
            <person name="Kamvysselis M."/>
            <person name="Mauceli E.W."/>
            <person name="Bielke C."/>
            <person name="Rudd S."/>
            <person name="Frishman D."/>
            <person name="Krystofova S."/>
            <person name="Rasmussen C."/>
            <person name="Metzenberg R.L."/>
            <person name="Perkins D.D."/>
            <person name="Kroken S."/>
            <person name="Cogoni C."/>
            <person name="Macino G."/>
            <person name="Catcheside D.E.A."/>
            <person name="Li W."/>
            <person name="Pratt R.J."/>
            <person name="Osmani S.A."/>
            <person name="DeSouza C.P.C."/>
            <person name="Glass N.L."/>
            <person name="Orbach M.J."/>
            <person name="Berglund J.A."/>
            <person name="Voelker R."/>
            <person name="Yarden O."/>
            <person name="Plamann M."/>
            <person name="Seiler S."/>
            <person name="Dunlap J.C."/>
            <person name="Radford A."/>
            <person name="Aramayo R."/>
            <person name="Natvig D.O."/>
            <person name="Alex L.A."/>
            <person name="Mannhaupt G."/>
            <person name="Ebbole D.J."/>
            <person name="Freitag M."/>
            <person name="Paulsen I."/>
            <person name="Sachs M.S."/>
            <person name="Lander E.S."/>
            <person name="Nusbaum C."/>
            <person name="Birren B.W."/>
        </authorList>
    </citation>
    <scope>NUCLEOTIDE SEQUENCE [LARGE SCALE GENOMIC DNA]</scope>
    <source>
        <strain>ATCC 24698 / 74-OR23-1A / CBS 708.71 / DSM 1257 / FGSC 987</strain>
    </source>
</reference>
<sequence>MADICPSRSEPTLSFTQGLILGQLSVVLLLAAFIKFFIFGDPPSPEVVASIRATDRRSRTLAHKKSILSLRETNALQLVQNPALNKKHVLRPGPPILTIGSILSKTYYKVDSHQPESLDWFNVLIAQTIAQFRSDAQHDDAILSSLSKALNGTARPDFLDEIKVTELSLGEDFPIFSNCRIIPVDEDGLSFGTGKAFDANMATREGARLQARMDVDLSDMITLAVETKLLLNYPKRLSAVLPVALAVSVVRFSGTLSISFIPSNPSNNEPAKMIFTFLDDYRLDFSIRSLLGSRSRLQDVPKIAQLVESRLHRWFDERCVEPRFQEIALPNMWPRKKNTRGGDETISDVERSMSKAKGVDIAKDVREEARKEIEAEAHGGADRVPDSLRYRHRPRADEEFPGAGSMPGSMPGSMP</sequence>
<protein>
    <recommendedName>
        <fullName evidence="1">Maintenance of mitochondrial morphology protein 1</fullName>
    </recommendedName>
</protein>